<evidence type="ECO:0000255" key="1">
    <source>
        <dbReference type="PROSITE-ProRule" id="PRU00497"/>
    </source>
</evidence>
<evidence type="ECO:0000269" key="2">
    <source>
    </source>
</evidence>
<feature type="chain" id="PRO_0000196159" description="Cuticle protein AM1239">
    <location>
        <begin position="1"/>
        <end position="112"/>
    </location>
</feature>
<feature type="domain" description="Chitin-binding type R&amp;R" evidence="1">
    <location>
        <begin position="16"/>
        <end position="85"/>
    </location>
</feature>
<feature type="glycosylation site" description="O-linked (HexNAc) threonine">
    <location>
        <position position="79"/>
    </location>
</feature>
<accession>P81578</accession>
<reference key="1">
    <citation type="journal article" date="1999" name="Comp. Biochem. Physiol.">
        <title>Exoskeletal proteins from the crab, Cancer pagurus.</title>
        <authorList>
            <person name="Andersen S.O."/>
        </authorList>
    </citation>
    <scope>PROTEIN SEQUENCE</scope>
    <scope>MASS SPECTROMETRY</scope>
    <source>
        <tissue>Carapace cuticle</tissue>
    </source>
</reference>
<protein>
    <recommendedName>
        <fullName>Cuticle protein AM1239</fullName>
        <shortName>CPAM1239</shortName>
    </recommendedName>
</protein>
<comment type="tissue specificity">
    <text>Arthrodial membrane.</text>
</comment>
<comment type="mass spectrometry" mass="12592.8" method="MALDI" evidence="2"/>
<keyword id="KW-0193">Cuticle</keyword>
<keyword id="KW-0903">Direct protein sequencing</keyword>
<keyword id="KW-0325">Glycoprotein</keyword>
<name>CUPA4_CANPG</name>
<organism>
    <name type="scientific">Cancer pagurus</name>
    <name type="common">Rock crab</name>
    <dbReference type="NCBI Taxonomy" id="6755"/>
    <lineage>
        <taxon>Eukaryota</taxon>
        <taxon>Metazoa</taxon>
        <taxon>Ecdysozoa</taxon>
        <taxon>Arthropoda</taxon>
        <taxon>Crustacea</taxon>
        <taxon>Multicrustacea</taxon>
        <taxon>Malacostraca</taxon>
        <taxon>Eumalacostraca</taxon>
        <taxon>Eucarida</taxon>
        <taxon>Decapoda</taxon>
        <taxon>Pleocyemata</taxon>
        <taxon>Brachyura</taxon>
        <taxon>Eubrachyura</taxon>
        <taxon>Cancroidea</taxon>
        <taxon>Cancridae</taxon>
        <taxon>Cancer</taxon>
    </lineage>
</organism>
<sequence length="112" mass="12394">EHEAEIILDERQDNGDGNFNYRFETTNGIAEERVGVPGSQGQSNMKGGYSFNLPDGSRFQLSFAADENGYNADSPFIPTDHPLPAHVIELLALVEELKRQGATWDDKGVRIT</sequence>
<dbReference type="GO" id="GO:0042302">
    <property type="term" value="F:structural constituent of cuticle"/>
    <property type="evidence" value="ECO:0007669"/>
    <property type="project" value="UniProtKB-KW"/>
</dbReference>
<dbReference type="InterPro" id="IPR031311">
    <property type="entry name" value="CHIT_BIND_RR_consensus"/>
</dbReference>
<dbReference type="InterPro" id="IPR000618">
    <property type="entry name" value="Insect_cuticle"/>
</dbReference>
<dbReference type="Pfam" id="PF00379">
    <property type="entry name" value="Chitin_bind_4"/>
    <property type="match status" value="1"/>
</dbReference>
<dbReference type="PRINTS" id="PR00947">
    <property type="entry name" value="CUTICLE"/>
</dbReference>
<dbReference type="PROSITE" id="PS00233">
    <property type="entry name" value="CHIT_BIND_RR_1"/>
    <property type="match status" value="1"/>
</dbReference>
<dbReference type="PROSITE" id="PS51155">
    <property type="entry name" value="CHIT_BIND_RR_2"/>
    <property type="match status" value="1"/>
</dbReference>
<proteinExistence type="evidence at protein level"/>